<sequence>MKMNYHLSTSSYTTSMLSCTVLDDDIRYEKLSWKLDEAEMQGLIM</sequence>
<organism>
    <name type="scientific">Saccharomyces cerevisiae (strain ATCC 204508 / S288c)</name>
    <name type="common">Baker's yeast</name>
    <dbReference type="NCBI Taxonomy" id="559292"/>
    <lineage>
        <taxon>Eukaryota</taxon>
        <taxon>Fungi</taxon>
        <taxon>Dikarya</taxon>
        <taxon>Ascomycota</taxon>
        <taxon>Saccharomycotina</taxon>
        <taxon>Saccharomycetes</taxon>
        <taxon>Saccharomycetales</taxon>
        <taxon>Saccharomycetaceae</taxon>
        <taxon>Saccharomyces</taxon>
    </lineage>
</organism>
<gene>
    <name type="ordered locus">YMR158C-A</name>
</gene>
<accession>Q3E843</accession>
<accession>D6VZY0</accession>
<protein>
    <recommendedName>
        <fullName>Uncharacterized protein YMR158C-A</fullName>
    </recommendedName>
</protein>
<dbReference type="EMBL" id="Z49705">
    <property type="status" value="NOT_ANNOTATED_CDS"/>
    <property type="molecule type" value="Genomic_DNA"/>
</dbReference>
<dbReference type="EMBL" id="BK006946">
    <property type="protein sequence ID" value="DAA10054.1"/>
    <property type="molecule type" value="Genomic_DNA"/>
</dbReference>
<dbReference type="BioGRID" id="35335">
    <property type="interactions" value="40"/>
</dbReference>
<dbReference type="FunCoup" id="Q3E843">
    <property type="interactions" value="33"/>
</dbReference>
<dbReference type="STRING" id="4932.YMR158C-A"/>
<dbReference type="PaxDb" id="4932-YMR158C-A"/>
<dbReference type="EnsemblFungi" id="YMR158C-A_mRNA">
    <property type="protein sequence ID" value="YMR158C-A"/>
    <property type="gene ID" value="YMR158C-A"/>
</dbReference>
<dbReference type="GeneID" id="855192"/>
<dbReference type="KEGG" id="sce:YMR158C-A"/>
<dbReference type="AGR" id="SGD:S000007249"/>
<dbReference type="SGD" id="S000007249">
    <property type="gene designation" value="YMR158C-A"/>
</dbReference>
<dbReference type="VEuPathDB" id="FungiDB:YMR158C-A"/>
<dbReference type="GeneTree" id="ENSGT00940000180892"/>
<dbReference type="HOGENOM" id="CLU_3207874_0_0_1"/>
<dbReference type="InParanoid" id="Q3E843"/>
<dbReference type="BioCyc" id="YEAST:G3O-33010-MONOMER"/>
<dbReference type="BioGRID-ORCS" id="855192">
    <property type="hits" value="0 hits in 10 CRISPR screens"/>
</dbReference>
<dbReference type="PRO" id="PR:Q3E843"/>
<dbReference type="Proteomes" id="UP000002311">
    <property type="component" value="Chromosome XIII"/>
</dbReference>
<dbReference type="GO" id="GO:0005777">
    <property type="term" value="C:peroxisome"/>
    <property type="evidence" value="ECO:0000314"/>
    <property type="project" value="SGD"/>
</dbReference>
<feature type="chain" id="PRO_0000268629" description="Uncharacterized protein YMR158C-A">
    <location>
        <begin position="1"/>
        <end position="45"/>
    </location>
</feature>
<keyword id="KW-1185">Reference proteome</keyword>
<proteinExistence type="predicted"/>
<reference key="1">
    <citation type="journal article" date="1997" name="Nature">
        <title>The nucleotide sequence of Saccharomyces cerevisiae chromosome XIII.</title>
        <authorList>
            <person name="Bowman S."/>
            <person name="Churcher C.M."/>
            <person name="Badcock K."/>
            <person name="Brown D."/>
            <person name="Chillingworth T."/>
            <person name="Connor R."/>
            <person name="Dedman K."/>
            <person name="Devlin K."/>
            <person name="Gentles S."/>
            <person name="Hamlin N."/>
            <person name="Hunt S."/>
            <person name="Jagels K."/>
            <person name="Lye G."/>
            <person name="Moule S."/>
            <person name="Odell C."/>
            <person name="Pearson D."/>
            <person name="Rajandream M.A."/>
            <person name="Rice P."/>
            <person name="Skelton J."/>
            <person name="Walsh S.V."/>
            <person name="Whitehead S."/>
            <person name="Barrell B.G."/>
        </authorList>
    </citation>
    <scope>NUCLEOTIDE SEQUENCE [LARGE SCALE GENOMIC DNA]</scope>
    <source>
        <strain>ATCC 204508 / S288c</strain>
    </source>
</reference>
<reference key="2">
    <citation type="journal article" date="2014" name="G3 (Bethesda)">
        <title>The reference genome sequence of Saccharomyces cerevisiae: Then and now.</title>
        <authorList>
            <person name="Engel S.R."/>
            <person name="Dietrich F.S."/>
            <person name="Fisk D.G."/>
            <person name="Binkley G."/>
            <person name="Balakrishnan R."/>
            <person name="Costanzo M.C."/>
            <person name="Dwight S.S."/>
            <person name="Hitz B.C."/>
            <person name="Karra K."/>
            <person name="Nash R.S."/>
            <person name="Weng S."/>
            <person name="Wong E.D."/>
            <person name="Lloyd P."/>
            <person name="Skrzypek M.S."/>
            <person name="Miyasato S.R."/>
            <person name="Simison M."/>
            <person name="Cherry J.M."/>
        </authorList>
    </citation>
    <scope>GENOME REANNOTATION</scope>
    <source>
        <strain>ATCC 204508 / S288c</strain>
    </source>
</reference>
<name>YM58C_YEAST</name>